<evidence type="ECO:0000255" key="1">
    <source>
        <dbReference type="HAMAP-Rule" id="MF_00050"/>
    </source>
</evidence>
<keyword id="KW-0963">Cytoplasm</keyword>
<keyword id="KW-0251">Elongation factor</keyword>
<keyword id="KW-0648">Protein biosynthesis</keyword>
<keyword id="KW-1185">Reference proteome</keyword>
<reference key="1">
    <citation type="journal article" date="2006" name="Proc. Natl. Acad. Sci. U.S.A.">
        <title>Comparative genomics of the lactic acid bacteria.</title>
        <authorList>
            <person name="Makarova K.S."/>
            <person name="Slesarev A."/>
            <person name="Wolf Y.I."/>
            <person name="Sorokin A."/>
            <person name="Mirkin B."/>
            <person name="Koonin E.V."/>
            <person name="Pavlov A."/>
            <person name="Pavlova N."/>
            <person name="Karamychev V."/>
            <person name="Polouchine N."/>
            <person name="Shakhova V."/>
            <person name="Grigoriev I."/>
            <person name="Lou Y."/>
            <person name="Rohksar D."/>
            <person name="Lucas S."/>
            <person name="Huang K."/>
            <person name="Goodstein D.M."/>
            <person name="Hawkins T."/>
            <person name="Plengvidhya V."/>
            <person name="Welker D."/>
            <person name="Hughes J."/>
            <person name="Goh Y."/>
            <person name="Benson A."/>
            <person name="Baldwin K."/>
            <person name="Lee J.-H."/>
            <person name="Diaz-Muniz I."/>
            <person name="Dosti B."/>
            <person name="Smeianov V."/>
            <person name="Wechter W."/>
            <person name="Barabote R."/>
            <person name="Lorca G."/>
            <person name="Altermann E."/>
            <person name="Barrangou R."/>
            <person name="Ganesan B."/>
            <person name="Xie Y."/>
            <person name="Rawsthorne H."/>
            <person name="Tamir D."/>
            <person name="Parker C."/>
            <person name="Breidt F."/>
            <person name="Broadbent J.R."/>
            <person name="Hutkins R."/>
            <person name="O'Sullivan D."/>
            <person name="Steele J."/>
            <person name="Unlu G."/>
            <person name="Saier M.H. Jr."/>
            <person name="Klaenhammer T."/>
            <person name="Richardson P."/>
            <person name="Kozyavkin S."/>
            <person name="Weimer B.C."/>
            <person name="Mills D.A."/>
        </authorList>
    </citation>
    <scope>NUCLEOTIDE SEQUENCE [LARGE SCALE GENOMIC DNA]</scope>
    <source>
        <strain>ATCC 367 / BCRC 12310 / CIP 105137 / JCM 1170 / LMG 11437 / NCIMB 947 / NCTC 947</strain>
    </source>
</reference>
<dbReference type="EMBL" id="CP000416">
    <property type="protein sequence ID" value="ABJ64450.1"/>
    <property type="molecule type" value="Genomic_DNA"/>
</dbReference>
<dbReference type="RefSeq" id="WP_011668023.1">
    <property type="nucleotide sequence ID" value="NC_008497.1"/>
</dbReference>
<dbReference type="SMR" id="Q03QS2"/>
<dbReference type="STRING" id="387344.LVIS_1349"/>
<dbReference type="GeneID" id="56993119"/>
<dbReference type="KEGG" id="lbr:LVIS_1349"/>
<dbReference type="eggNOG" id="COG0264">
    <property type="taxonomic scope" value="Bacteria"/>
</dbReference>
<dbReference type="HOGENOM" id="CLU_047155_0_2_9"/>
<dbReference type="Proteomes" id="UP000001652">
    <property type="component" value="Chromosome"/>
</dbReference>
<dbReference type="GO" id="GO:0005737">
    <property type="term" value="C:cytoplasm"/>
    <property type="evidence" value="ECO:0007669"/>
    <property type="project" value="UniProtKB-SubCell"/>
</dbReference>
<dbReference type="GO" id="GO:0003746">
    <property type="term" value="F:translation elongation factor activity"/>
    <property type="evidence" value="ECO:0007669"/>
    <property type="project" value="UniProtKB-UniRule"/>
</dbReference>
<dbReference type="CDD" id="cd14275">
    <property type="entry name" value="UBA_EF-Ts"/>
    <property type="match status" value="1"/>
</dbReference>
<dbReference type="FunFam" id="1.10.286.20:FF:000001">
    <property type="entry name" value="Elongation factor Ts"/>
    <property type="match status" value="1"/>
</dbReference>
<dbReference type="FunFam" id="1.10.8.10:FF:000001">
    <property type="entry name" value="Elongation factor Ts"/>
    <property type="match status" value="1"/>
</dbReference>
<dbReference type="Gene3D" id="1.10.286.20">
    <property type="match status" value="1"/>
</dbReference>
<dbReference type="Gene3D" id="1.10.8.10">
    <property type="entry name" value="DNA helicase RuvA subunit, C-terminal domain"/>
    <property type="match status" value="1"/>
</dbReference>
<dbReference type="Gene3D" id="3.30.479.20">
    <property type="entry name" value="Elongation factor Ts, dimerisation domain"/>
    <property type="match status" value="2"/>
</dbReference>
<dbReference type="HAMAP" id="MF_00050">
    <property type="entry name" value="EF_Ts"/>
    <property type="match status" value="1"/>
</dbReference>
<dbReference type="InterPro" id="IPR036402">
    <property type="entry name" value="EF-Ts_dimer_sf"/>
</dbReference>
<dbReference type="InterPro" id="IPR001816">
    <property type="entry name" value="Transl_elong_EFTs/EF1B"/>
</dbReference>
<dbReference type="InterPro" id="IPR014039">
    <property type="entry name" value="Transl_elong_EFTs/EF1B_dimer"/>
</dbReference>
<dbReference type="InterPro" id="IPR018101">
    <property type="entry name" value="Transl_elong_Ts_CS"/>
</dbReference>
<dbReference type="InterPro" id="IPR009060">
    <property type="entry name" value="UBA-like_sf"/>
</dbReference>
<dbReference type="NCBIfam" id="TIGR00116">
    <property type="entry name" value="tsf"/>
    <property type="match status" value="1"/>
</dbReference>
<dbReference type="PANTHER" id="PTHR11741">
    <property type="entry name" value="ELONGATION FACTOR TS"/>
    <property type="match status" value="1"/>
</dbReference>
<dbReference type="PANTHER" id="PTHR11741:SF0">
    <property type="entry name" value="ELONGATION FACTOR TS, MITOCHONDRIAL"/>
    <property type="match status" value="1"/>
</dbReference>
<dbReference type="Pfam" id="PF00889">
    <property type="entry name" value="EF_TS"/>
    <property type="match status" value="1"/>
</dbReference>
<dbReference type="SUPFAM" id="SSF54713">
    <property type="entry name" value="Elongation factor Ts (EF-Ts), dimerisation domain"/>
    <property type="match status" value="2"/>
</dbReference>
<dbReference type="SUPFAM" id="SSF46934">
    <property type="entry name" value="UBA-like"/>
    <property type="match status" value="1"/>
</dbReference>
<dbReference type="PROSITE" id="PS01126">
    <property type="entry name" value="EF_TS_1"/>
    <property type="match status" value="1"/>
</dbReference>
<proteinExistence type="inferred from homology"/>
<organism>
    <name type="scientific">Levilactobacillus brevis (strain ATCC 367 / BCRC 12310 / CIP 105137 / JCM 1170 / LMG 11437 / NCIMB 947 / NCTC 947)</name>
    <name type="common">Lactobacillus brevis</name>
    <dbReference type="NCBI Taxonomy" id="387344"/>
    <lineage>
        <taxon>Bacteria</taxon>
        <taxon>Bacillati</taxon>
        <taxon>Bacillota</taxon>
        <taxon>Bacilli</taxon>
        <taxon>Lactobacillales</taxon>
        <taxon>Lactobacillaceae</taxon>
        <taxon>Levilactobacillus</taxon>
    </lineage>
</organism>
<gene>
    <name evidence="1" type="primary">tsf</name>
    <name type="ordered locus">LVIS_1349</name>
</gene>
<protein>
    <recommendedName>
        <fullName evidence="1">Elongation factor Ts</fullName>
        <shortName evidence="1">EF-Ts</shortName>
    </recommendedName>
</protein>
<name>EFTS_LEVBA</name>
<sequence>MASKITAAQVKELRDKTQVGMMDAKKALVASEGDMDKAIDFLREKGIAKAKKKSGNVAANGLARVKEDGNTAAIIEVNSETDFVATNDTFNALVDTIADTIAEKQPADLDAALALTTADGSTINDAIVKTTQVTSENVQLRRFAVVKKTDGQVFGSYLHQGGQIAAVVVLDGADEATAKDVAMHVAAINPEFVSRDDIPAERLDHEREVLKQEALNEGKPEKIVEKMVEGRLHKFLSEISLADQPFVKDGDQTVSQFVASKGGKLVTFVRYEVGEGIEKPVADLAKEVQDQING</sequence>
<feature type="chain" id="PRO_0000323454" description="Elongation factor Ts">
    <location>
        <begin position="1"/>
        <end position="294"/>
    </location>
</feature>
<feature type="region of interest" description="Involved in Mg(2+) ion dislocation from EF-Tu" evidence="1">
    <location>
        <begin position="81"/>
        <end position="84"/>
    </location>
</feature>
<comment type="function">
    <text evidence="1">Associates with the EF-Tu.GDP complex and induces the exchange of GDP to GTP. It remains bound to the aminoacyl-tRNA.EF-Tu.GTP complex up to the GTP hydrolysis stage on the ribosome.</text>
</comment>
<comment type="subcellular location">
    <subcellularLocation>
        <location evidence="1">Cytoplasm</location>
    </subcellularLocation>
</comment>
<comment type="similarity">
    <text evidence="1">Belongs to the EF-Ts family.</text>
</comment>
<accession>Q03QS2</accession>